<name>BGAL_THETH</name>
<comment type="catalytic activity">
    <reaction>
        <text>Hydrolysis of terminal non-reducing beta-D-galactose residues in beta-D-galactosides.</text>
        <dbReference type="EC" id="3.2.1.23"/>
    </reaction>
</comment>
<comment type="activity regulation">
    <text evidence="2">Inhibited by Cu(2+) and Fe(2+), and moderately activated by divalent cations such as Co(2+), Mn(2+) and Zn(2+). Considerably activated by dithiothreitol, beta-mercaptoethanol and cysteine.</text>
</comment>
<comment type="biophysicochemical properties">
    <kinetics>
        <KM evidence="2">19 mM for lactose (at pH 6.5 and at 70 degrees Celsius)</KM>
        <KM evidence="2">5.9 mM for o-nitrophenyl beta-D-galactopyranoside (at pH 6.5 and at 70 degrees Celsius)</KM>
    </kinetics>
    <phDependence>
        <text evidence="2">Optimum pH is 6.5. No activity is detected at pH below 4.5.</text>
    </phDependence>
    <temperatureDependence>
        <text evidence="2">Optimum temperature is 70 degrees Celsius. It retains more than 75% of activity after incubation at 85 degrees Celsius and the half-life at 90 degrees Celsius is 1 hour. Thermostable.</text>
    </temperatureDependence>
</comment>
<comment type="subunit">
    <text evidence="1 2">Homotrimer.</text>
</comment>
<comment type="miscellaneous">
    <text>The trimeric structure is essential to exhibit high enzymatic activity.</text>
</comment>
<comment type="similarity">
    <text evidence="3">Belongs to the glycosyl hydrolase 42 family.</text>
</comment>
<dbReference type="EC" id="3.2.1.23"/>
<dbReference type="EMBL" id="D85027">
    <property type="protein sequence ID" value="BAA28362.1"/>
    <property type="molecule type" value="Genomic_DNA"/>
</dbReference>
<dbReference type="PDB" id="1KWG">
    <property type="method" value="X-ray"/>
    <property type="resolution" value="1.60 A"/>
    <property type="chains" value="A=1-645"/>
</dbReference>
<dbReference type="PDB" id="1KWK">
    <property type="method" value="X-ray"/>
    <property type="resolution" value="2.20 A"/>
    <property type="chains" value="A=1-645"/>
</dbReference>
<dbReference type="PDBsum" id="1KWG"/>
<dbReference type="PDBsum" id="1KWK"/>
<dbReference type="SMR" id="O69315"/>
<dbReference type="CAZy" id="GH42">
    <property type="family name" value="Glycoside Hydrolase Family 42"/>
</dbReference>
<dbReference type="EvolutionaryTrace" id="O69315"/>
<dbReference type="GO" id="GO:0009341">
    <property type="term" value="C:beta-galactosidase complex"/>
    <property type="evidence" value="ECO:0007669"/>
    <property type="project" value="InterPro"/>
</dbReference>
<dbReference type="GO" id="GO:0004565">
    <property type="term" value="F:beta-galactosidase activity"/>
    <property type="evidence" value="ECO:0007669"/>
    <property type="project" value="UniProtKB-EC"/>
</dbReference>
<dbReference type="GO" id="GO:0046872">
    <property type="term" value="F:metal ion binding"/>
    <property type="evidence" value="ECO:0007669"/>
    <property type="project" value="UniProtKB-KW"/>
</dbReference>
<dbReference type="GO" id="GO:0006012">
    <property type="term" value="P:galactose metabolic process"/>
    <property type="evidence" value="ECO:0007669"/>
    <property type="project" value="InterPro"/>
</dbReference>
<dbReference type="CDD" id="cd03143">
    <property type="entry name" value="A4_beta-galactosidase_middle_domain"/>
    <property type="match status" value="1"/>
</dbReference>
<dbReference type="Gene3D" id="3.40.50.880">
    <property type="match status" value="1"/>
</dbReference>
<dbReference type="Gene3D" id="3.20.20.80">
    <property type="entry name" value="Glycosidases"/>
    <property type="match status" value="1"/>
</dbReference>
<dbReference type="Gene3D" id="2.60.40.1180">
    <property type="entry name" value="Golgi alpha-mannosidase II"/>
    <property type="match status" value="1"/>
</dbReference>
<dbReference type="InterPro" id="IPR013739">
    <property type="entry name" value="Beta_galactosidase_C"/>
</dbReference>
<dbReference type="InterPro" id="IPR013738">
    <property type="entry name" value="Beta_galactosidase_Trimer"/>
</dbReference>
<dbReference type="InterPro" id="IPR029062">
    <property type="entry name" value="Class_I_gatase-like"/>
</dbReference>
<dbReference type="InterPro" id="IPR003476">
    <property type="entry name" value="Glyco_hydro_42"/>
</dbReference>
<dbReference type="InterPro" id="IPR013529">
    <property type="entry name" value="Glyco_hydro_42_N"/>
</dbReference>
<dbReference type="InterPro" id="IPR013780">
    <property type="entry name" value="Glyco_hydro_b"/>
</dbReference>
<dbReference type="InterPro" id="IPR017853">
    <property type="entry name" value="Glycoside_hydrolase_SF"/>
</dbReference>
<dbReference type="PANTHER" id="PTHR36447">
    <property type="entry name" value="BETA-GALACTOSIDASE GANA"/>
    <property type="match status" value="1"/>
</dbReference>
<dbReference type="PANTHER" id="PTHR36447:SF2">
    <property type="entry name" value="BETA-GALACTOSIDASE YESZ"/>
    <property type="match status" value="1"/>
</dbReference>
<dbReference type="Pfam" id="PF02449">
    <property type="entry name" value="Glyco_hydro_42"/>
    <property type="match status" value="1"/>
</dbReference>
<dbReference type="Pfam" id="PF08533">
    <property type="entry name" value="Glyco_hydro_42C"/>
    <property type="match status" value="1"/>
</dbReference>
<dbReference type="Pfam" id="PF08532">
    <property type="entry name" value="Glyco_hydro_42M"/>
    <property type="match status" value="1"/>
</dbReference>
<dbReference type="PIRSF" id="PIRSF001084">
    <property type="entry name" value="B-galactosidase"/>
    <property type="match status" value="1"/>
</dbReference>
<dbReference type="SUPFAM" id="SSF51445">
    <property type="entry name" value="(Trans)glycosidases"/>
    <property type="match status" value="1"/>
</dbReference>
<dbReference type="SUPFAM" id="SSF52317">
    <property type="entry name" value="Class I glutamine amidotransferase-like"/>
    <property type="match status" value="1"/>
</dbReference>
<dbReference type="SUPFAM" id="SSF51011">
    <property type="entry name" value="Glycosyl hydrolase domain"/>
    <property type="match status" value="1"/>
</dbReference>
<sequence length="645" mass="72824">MLGVCYYPEHWPKERWKEDARRMREAGLSHVRIGEFAWALLEPEPGRLEWGWLDEAIATLAAEGLKVVLGTPTATPPKWLVDRYPEILPVDREGRRRRFGGRRHYCFSSPVYREEARRIVTLLAERYGGLEAVAGFQTDNEYGCHDTVRCYCPRCQEAFRGWLEARYGTIEALNEAWGTAFWSQRYRSFAEVELPHLTVAEPNPSHLLDYYRFASDQVRAFNRLQVEILRAHAPGKFVTHNFMGFFTDLDAFALAQDLDFASWDSYPLGFTDLMPLPPEEKLRYARTGHPDVAAFHHDLYRGVGRGRFWVMEQQPGPVNWAPHNPSPAPGMVRLWTWEALAHGAEVVSYFRWRQAPFAQEQMHAGLHRPDSAPDQGFFEAKRVAEELAALALPPVAQAPVALVFDYEAAWIYEVQPQGAEWSYLGLVYLFYSALRRLGLDVDVVPPGASLRGYAFAVVPSLPIVREEALEAFREAEGPVLFGPRSGSKTETFQIPKELPPGPLQALLPLKVVRVESLPPGLLEVAEGALGRFPLGLWREWVEAPLKPLLTFQDGKGALYREGRYLYLAAWPSPELAGRLLSALAAEAGLKVLSLPEGLRLRRRGTWVFAFNYGPEAVEAPASEGARFLLGSRRVGPYDLAVWEEA</sequence>
<evidence type="ECO:0000269" key="1">
    <source>
    </source>
</evidence>
<evidence type="ECO:0000269" key="2">
    <source>
    </source>
</evidence>
<evidence type="ECO:0000305" key="3"/>
<evidence type="ECO:0007829" key="4">
    <source>
        <dbReference type="PDB" id="1KWG"/>
    </source>
</evidence>
<reference key="1">
    <citation type="journal article" date="1998" name="Biosci. Biotechnol. Biochem.">
        <title>Thermostable beta-galactosidase from an extreme thermophile, Thermus sp. A4: enzyme purification and characterization, and gene cloning and sequencing.</title>
        <authorList>
            <person name="Ohtsu N."/>
            <person name="Motoshima H."/>
            <person name="Goto K."/>
            <person name="Tsukasaki F."/>
            <person name="Matsuzawa H."/>
        </authorList>
    </citation>
    <scope>NUCLEOTIDE SEQUENCE [GENOMIC DNA]</scope>
    <scope>PROTEIN SEQUENCE OF 1-15</scope>
    <scope>BIOPHYSICOCHEMICAL PROPERTIES</scope>
    <scope>ACTIVITY REGULATION</scope>
    <scope>SUBUNIT</scope>
    <source>
        <strain>A4</strain>
    </source>
</reference>
<reference key="2">
    <citation type="journal article" date="2002" name="J. Mol. Biol.">
        <title>Trimeric crystal structure of the glycoside hydrolase family 42 beta-galactosidase from Thermus thermophilus A4 and the structure of its complex with galactose.</title>
        <authorList>
            <person name="Hidaka M."/>
            <person name="Fushinobu S."/>
            <person name="Ohtsu N."/>
            <person name="Motoshima H."/>
            <person name="Matsuzawa H."/>
            <person name="Shoun H."/>
            <person name="Wakagi T."/>
        </authorList>
    </citation>
    <scope>X-RAY CRYSTALLOGRAPHY (1.6 ANGSTROMS) IN COMPLEX WITH ZINC ION AND SUBSTRATE</scope>
    <scope>REACTION MECHANISM</scope>
    <scope>SUBUNIT</scope>
</reference>
<feature type="chain" id="PRO_0000367028" description="Beta-galactosidase">
    <location>
        <begin position="1"/>
        <end position="645"/>
    </location>
</feature>
<feature type="active site" description="Proton donor">
    <location>
        <position position="141"/>
    </location>
</feature>
<feature type="active site" description="Nucleophile">
    <location>
        <position position="312"/>
    </location>
</feature>
<feature type="binding site" evidence="1">
    <location>
        <position position="102"/>
    </location>
    <ligand>
        <name>substrate</name>
    </ligand>
</feature>
<feature type="binding site">
    <location>
        <position position="106"/>
    </location>
    <ligand>
        <name>Zn(2+)</name>
        <dbReference type="ChEBI" id="CHEBI:29105"/>
    </ligand>
</feature>
<feature type="binding site" evidence="1">
    <location>
        <position position="140"/>
    </location>
    <ligand>
        <name>substrate</name>
    </ligand>
</feature>
<feature type="binding site">
    <location>
        <position position="150"/>
    </location>
    <ligand>
        <name>Zn(2+)</name>
        <dbReference type="ChEBI" id="CHEBI:29105"/>
    </ligand>
</feature>
<feature type="binding site">
    <location>
        <position position="152"/>
    </location>
    <ligand>
        <name>Zn(2+)</name>
        <dbReference type="ChEBI" id="CHEBI:29105"/>
    </ligand>
</feature>
<feature type="binding site">
    <location>
        <position position="155"/>
    </location>
    <ligand>
        <name>Zn(2+)</name>
        <dbReference type="ChEBI" id="CHEBI:29105"/>
    </ligand>
</feature>
<feature type="binding site" evidence="1">
    <location>
        <position position="320"/>
    </location>
    <ligand>
        <name>substrate</name>
    </ligand>
</feature>
<feature type="binding site">
    <location>
        <begin position="360"/>
        <end position="363"/>
    </location>
    <ligand>
        <name>substrate</name>
    </ligand>
</feature>
<feature type="strand" evidence="4">
    <location>
        <begin position="2"/>
        <end position="5"/>
    </location>
</feature>
<feature type="helix" evidence="4">
    <location>
        <begin position="8"/>
        <end position="10"/>
    </location>
</feature>
<feature type="helix" evidence="4">
    <location>
        <begin position="13"/>
        <end position="15"/>
    </location>
</feature>
<feature type="helix" evidence="4">
    <location>
        <begin position="16"/>
        <end position="26"/>
    </location>
</feature>
<feature type="strand" evidence="4">
    <location>
        <begin position="30"/>
        <end position="33"/>
    </location>
</feature>
<feature type="helix" evidence="4">
    <location>
        <begin position="38"/>
        <end position="41"/>
    </location>
</feature>
<feature type="helix" evidence="4">
    <location>
        <begin position="51"/>
        <end position="61"/>
    </location>
</feature>
<feature type="turn" evidence="4">
    <location>
        <begin position="62"/>
        <end position="64"/>
    </location>
</feature>
<feature type="strand" evidence="4">
    <location>
        <begin position="66"/>
        <end position="70"/>
    </location>
</feature>
<feature type="helix" evidence="4">
    <location>
        <begin position="78"/>
        <end position="83"/>
    </location>
</feature>
<feature type="helix" evidence="4">
    <location>
        <begin position="85"/>
        <end position="87"/>
    </location>
</feature>
<feature type="strand" evidence="4">
    <location>
        <begin position="99"/>
        <end position="102"/>
    </location>
</feature>
<feature type="helix" evidence="4">
    <location>
        <begin position="110"/>
        <end position="127"/>
    </location>
</feature>
<feature type="strand" evidence="4">
    <location>
        <begin position="133"/>
        <end position="137"/>
    </location>
</feature>
<feature type="strand" evidence="4">
    <location>
        <begin position="139"/>
        <end position="141"/>
    </location>
</feature>
<feature type="turn" evidence="4">
    <location>
        <begin position="142"/>
        <end position="146"/>
    </location>
</feature>
<feature type="helix" evidence="4">
    <location>
        <begin position="153"/>
        <end position="167"/>
    </location>
</feature>
<feature type="helix" evidence="4">
    <location>
        <begin position="170"/>
        <end position="177"/>
    </location>
</feature>
<feature type="turn" evidence="4">
    <location>
        <begin position="178"/>
        <end position="180"/>
    </location>
</feature>
<feature type="helix" evidence="4">
    <location>
        <begin position="181"/>
        <end position="183"/>
    </location>
</feature>
<feature type="helix" evidence="4">
    <location>
        <begin position="189"/>
        <end position="191"/>
    </location>
</feature>
<feature type="helix" evidence="4">
    <location>
        <begin position="204"/>
        <end position="232"/>
    </location>
</feature>
<feature type="strand" evidence="4">
    <location>
        <begin position="237"/>
        <end position="239"/>
    </location>
</feature>
<feature type="helix" evidence="4">
    <location>
        <begin position="251"/>
        <end position="254"/>
    </location>
</feature>
<feature type="helix" evidence="4">
    <location>
        <begin position="255"/>
        <end position="257"/>
    </location>
</feature>
<feature type="strand" evidence="4">
    <location>
        <begin position="258"/>
        <end position="265"/>
    </location>
</feature>
<feature type="helix" evidence="4">
    <location>
        <begin position="267"/>
        <end position="273"/>
    </location>
</feature>
<feature type="helix" evidence="4">
    <location>
        <begin position="278"/>
        <end position="283"/>
    </location>
</feature>
<feature type="turn" evidence="4">
    <location>
        <begin position="284"/>
        <end position="287"/>
    </location>
</feature>
<feature type="helix" evidence="4">
    <location>
        <begin position="292"/>
        <end position="303"/>
    </location>
</feature>
<feature type="turn" evidence="4">
    <location>
        <begin position="304"/>
        <end position="306"/>
    </location>
</feature>
<feature type="strand" evidence="4">
    <location>
        <begin position="308"/>
        <end position="313"/>
    </location>
</feature>
<feature type="strand" evidence="4">
    <location>
        <begin position="319"/>
        <end position="323"/>
    </location>
</feature>
<feature type="helix" evidence="4">
    <location>
        <begin position="331"/>
        <end position="341"/>
    </location>
</feature>
<feature type="strand" evidence="4">
    <location>
        <begin position="347"/>
        <end position="350"/>
    </location>
</feature>
<feature type="strand" evidence="4">
    <location>
        <begin position="356"/>
        <end position="358"/>
    </location>
</feature>
<feature type="turn" evidence="4">
    <location>
        <begin position="359"/>
        <end position="362"/>
    </location>
</feature>
<feature type="helix" evidence="4">
    <location>
        <begin position="375"/>
        <end position="388"/>
    </location>
</feature>
<feature type="strand" evidence="4">
    <location>
        <begin position="399"/>
        <end position="403"/>
    </location>
</feature>
<feature type="helix" evidence="4">
    <location>
        <begin position="406"/>
        <end position="414"/>
    </location>
</feature>
<feature type="helix" evidence="4">
    <location>
        <begin position="423"/>
        <end position="435"/>
    </location>
</feature>
<feature type="turn" evidence="4">
    <location>
        <begin position="436"/>
        <end position="438"/>
    </location>
</feature>
<feature type="strand" evidence="4">
    <location>
        <begin position="441"/>
        <end position="444"/>
    </location>
</feature>
<feature type="strand" evidence="4">
    <location>
        <begin position="454"/>
        <end position="459"/>
    </location>
</feature>
<feature type="helix" evidence="4">
    <location>
        <begin position="466"/>
        <end position="473"/>
    </location>
</feature>
<feature type="strand" evidence="4">
    <location>
        <begin position="479"/>
        <end position="481"/>
    </location>
</feature>
<feature type="turn" evidence="4">
    <location>
        <begin position="483"/>
        <end position="486"/>
    </location>
</feature>
<feature type="helix" evidence="4">
    <location>
        <begin position="501"/>
        <end position="505"/>
    </location>
</feature>
<feature type="strand" evidence="4">
    <location>
        <begin position="510"/>
        <end position="516"/>
    </location>
</feature>
<feature type="strand" evidence="4">
    <location>
        <begin position="523"/>
        <end position="527"/>
    </location>
</feature>
<feature type="strand" evidence="4">
    <location>
        <begin position="530"/>
        <end position="534"/>
    </location>
</feature>
<feature type="strand" evidence="4">
    <location>
        <begin position="536"/>
        <end position="542"/>
    </location>
</feature>
<feature type="strand" evidence="4">
    <location>
        <begin position="548"/>
        <end position="551"/>
    </location>
</feature>
<feature type="strand" evidence="4">
    <location>
        <begin position="556"/>
        <end position="561"/>
    </location>
</feature>
<feature type="strand" evidence="4">
    <location>
        <begin position="564"/>
        <end position="567"/>
    </location>
</feature>
<feature type="helix" evidence="4">
    <location>
        <begin position="573"/>
        <end position="586"/>
    </location>
</feature>
<feature type="strand" evidence="4">
    <location>
        <begin position="598"/>
        <end position="603"/>
    </location>
</feature>
<feature type="strand" evidence="4">
    <location>
        <begin position="606"/>
        <end position="611"/>
    </location>
</feature>
<feature type="strand" evidence="4">
    <location>
        <begin position="613"/>
        <end position="615"/>
    </location>
</feature>
<feature type="strand" evidence="4">
    <location>
        <begin position="626"/>
        <end position="630"/>
    </location>
</feature>
<feature type="strand" evidence="4">
    <location>
        <begin position="632"/>
        <end position="634"/>
    </location>
</feature>
<feature type="strand" evidence="4">
    <location>
        <begin position="638"/>
        <end position="643"/>
    </location>
</feature>
<organism>
    <name type="scientific">Thermus thermophilus</name>
    <dbReference type="NCBI Taxonomy" id="274"/>
    <lineage>
        <taxon>Bacteria</taxon>
        <taxon>Thermotogati</taxon>
        <taxon>Deinococcota</taxon>
        <taxon>Deinococci</taxon>
        <taxon>Thermales</taxon>
        <taxon>Thermaceae</taxon>
        <taxon>Thermus</taxon>
    </lineage>
</organism>
<proteinExistence type="evidence at protein level"/>
<keyword id="KW-0002">3D-structure</keyword>
<keyword id="KW-0903">Direct protein sequencing</keyword>
<keyword id="KW-0326">Glycosidase</keyword>
<keyword id="KW-0378">Hydrolase</keyword>
<keyword id="KW-0479">Metal-binding</keyword>
<keyword id="KW-0862">Zinc</keyword>
<protein>
    <recommendedName>
        <fullName>Beta-galactosidase</fullName>
        <shortName>Beta-gal</shortName>
        <ecNumber>3.2.1.23</ecNumber>
    </recommendedName>
    <alternativeName>
        <fullName>Lactase</fullName>
    </alternativeName>
</protein>
<accession>O69315</accession>